<reference key="1">
    <citation type="journal article" date="2003" name="Gene">
        <title>Novel sequences encoding venom C-type lectins are conserved in phylogenetically and geographically distinct Echis and Bitis viper species.</title>
        <authorList>
            <person name="Harrison R.A."/>
            <person name="Oliver J."/>
            <person name="Hasson S.S."/>
            <person name="Bharati K."/>
            <person name="Theakston R.D.G."/>
        </authorList>
    </citation>
    <scope>NUCLEOTIDE SEQUENCE [MRNA]</scope>
    <source>
        <tissue>Venom gland</tissue>
    </source>
</reference>
<name>SL8_ECHCS</name>
<keyword id="KW-1015">Disulfide bond</keyword>
<keyword id="KW-1199">Hemostasis impairing toxin</keyword>
<keyword id="KW-0964">Secreted</keyword>
<keyword id="KW-0732">Signal</keyword>
<keyword id="KW-0800">Toxin</keyword>
<feature type="signal peptide" evidence="2">
    <location>
        <begin position="1"/>
        <end position="23"/>
    </location>
</feature>
<feature type="chain" id="PRO_0000355269" description="Snaclec 8">
    <location>
        <begin position="24"/>
        <end position="148"/>
    </location>
</feature>
<feature type="domain" description="C-type lectin" evidence="3">
    <location>
        <begin position="34"/>
        <end position="148"/>
    </location>
</feature>
<dbReference type="EMBL" id="AY254334">
    <property type="protein sequence ID" value="AAQ01215.1"/>
    <property type="molecule type" value="mRNA"/>
</dbReference>
<dbReference type="SMR" id="Q6X5S6"/>
<dbReference type="GO" id="GO:0005576">
    <property type="term" value="C:extracellular region"/>
    <property type="evidence" value="ECO:0007669"/>
    <property type="project" value="UniProtKB-SubCell"/>
</dbReference>
<dbReference type="GO" id="GO:0090729">
    <property type="term" value="F:toxin activity"/>
    <property type="evidence" value="ECO:0007669"/>
    <property type="project" value="UniProtKB-KW"/>
</dbReference>
<dbReference type="FunFam" id="3.10.100.10:FF:000087">
    <property type="entry name" value="Snaclec rhodocetin subunit delta"/>
    <property type="match status" value="1"/>
</dbReference>
<dbReference type="Gene3D" id="3.10.100.10">
    <property type="entry name" value="Mannose-Binding Protein A, subunit A"/>
    <property type="match status" value="1"/>
</dbReference>
<dbReference type="InterPro" id="IPR001304">
    <property type="entry name" value="C-type_lectin-like"/>
</dbReference>
<dbReference type="InterPro" id="IPR016186">
    <property type="entry name" value="C-type_lectin-like/link_sf"/>
</dbReference>
<dbReference type="InterPro" id="IPR050111">
    <property type="entry name" value="C-type_lectin/snaclec_domain"/>
</dbReference>
<dbReference type="InterPro" id="IPR016187">
    <property type="entry name" value="CTDL_fold"/>
</dbReference>
<dbReference type="PANTHER" id="PTHR22803">
    <property type="entry name" value="MANNOSE, PHOSPHOLIPASE, LECTIN RECEPTOR RELATED"/>
    <property type="match status" value="1"/>
</dbReference>
<dbReference type="Pfam" id="PF00059">
    <property type="entry name" value="Lectin_C"/>
    <property type="match status" value="1"/>
</dbReference>
<dbReference type="PRINTS" id="PR01504">
    <property type="entry name" value="PNCREATITSAP"/>
</dbReference>
<dbReference type="SMART" id="SM00034">
    <property type="entry name" value="CLECT"/>
    <property type="match status" value="1"/>
</dbReference>
<dbReference type="SUPFAM" id="SSF56436">
    <property type="entry name" value="C-type lectin-like"/>
    <property type="match status" value="1"/>
</dbReference>
<dbReference type="PROSITE" id="PS50041">
    <property type="entry name" value="C_TYPE_LECTIN_2"/>
    <property type="match status" value="1"/>
</dbReference>
<sequence length="148" mass="16879">MGRFIFVSFSLLVVFFSLSGTEAGVCCPLGWSGYDQNCYKAFEELMNWADAEKFCTQQHKGSHLVSLHNIAEADFVVKKIVSVLKDGVIWMGLNDVWNECNWGWTDGAQLDYKAWNVESNCFIFKTADKPLVTYGLQWDTQFRLQEPG</sequence>
<comment type="function">
    <text evidence="1">Interferes with one step of hemostasis (modulation of platelet aggregation, or coagulation cascade, for example).</text>
</comment>
<comment type="subunit">
    <text evidence="1">Heterodimer; disulfide-linked.</text>
</comment>
<comment type="subcellular location">
    <subcellularLocation>
        <location evidence="1">Secreted</location>
    </subcellularLocation>
</comment>
<comment type="tissue specificity">
    <text>Expressed by the venom gland.</text>
</comment>
<comment type="PTM">
    <text>Contains disulfide bonds.</text>
</comment>
<comment type="miscellaneous">
    <text>Shows greater sequence similarity to the beta than alpha subunits compared to other heterodimer snaclecs.</text>
</comment>
<comment type="similarity">
    <text evidence="4">Belongs to the snaclec family.</text>
</comment>
<accession>Q6X5S6</accession>
<protein>
    <recommendedName>
        <fullName>Snaclec 8</fullName>
    </recommendedName>
    <alternativeName>
        <fullName>C-type lectin 8</fullName>
        <shortName>CTL-8</shortName>
    </alternativeName>
</protein>
<evidence type="ECO:0000250" key="1"/>
<evidence type="ECO:0000255" key="2"/>
<evidence type="ECO:0000255" key="3">
    <source>
        <dbReference type="PROSITE-ProRule" id="PRU00040"/>
    </source>
</evidence>
<evidence type="ECO:0000305" key="4"/>
<organism>
    <name type="scientific">Echis carinatus sochureki</name>
    <name type="common">Saw-scaled viper</name>
    <dbReference type="NCBI Taxonomy" id="124223"/>
    <lineage>
        <taxon>Eukaryota</taxon>
        <taxon>Metazoa</taxon>
        <taxon>Chordata</taxon>
        <taxon>Craniata</taxon>
        <taxon>Vertebrata</taxon>
        <taxon>Euteleostomi</taxon>
        <taxon>Lepidosauria</taxon>
        <taxon>Squamata</taxon>
        <taxon>Bifurcata</taxon>
        <taxon>Unidentata</taxon>
        <taxon>Episquamata</taxon>
        <taxon>Toxicofera</taxon>
        <taxon>Serpentes</taxon>
        <taxon>Colubroidea</taxon>
        <taxon>Viperidae</taxon>
        <taxon>Viperinae</taxon>
        <taxon>Echis</taxon>
    </lineage>
</organism>
<proteinExistence type="evidence at transcript level"/>